<keyword id="KW-0238">DNA-binding</keyword>
<keyword id="KW-0479">Metal-binding</keyword>
<keyword id="KW-0539">Nucleus</keyword>
<keyword id="KW-1185">Reference proteome</keyword>
<keyword id="KW-0804">Transcription</keyword>
<keyword id="KW-0805">Transcription regulation</keyword>
<keyword id="KW-0862">Zinc</keyword>
<reference key="1">
    <citation type="journal article" date="2008" name="Nat. Biotechnol.">
        <title>Genome sequencing and analysis of the filamentous fungus Penicillium chrysogenum.</title>
        <authorList>
            <person name="van den Berg M.A."/>
            <person name="Albang R."/>
            <person name="Albermann K."/>
            <person name="Badger J.H."/>
            <person name="Daran J.-M."/>
            <person name="Driessen A.J.M."/>
            <person name="Garcia-Estrada C."/>
            <person name="Fedorova N.D."/>
            <person name="Harris D.M."/>
            <person name="Heijne W.H.M."/>
            <person name="Joardar V.S."/>
            <person name="Kiel J.A.K.W."/>
            <person name="Kovalchuk A."/>
            <person name="Martin J.F."/>
            <person name="Nierman W.C."/>
            <person name="Nijland J.G."/>
            <person name="Pronk J.T."/>
            <person name="Roubos J.A."/>
            <person name="van der Klei I.J."/>
            <person name="van Peij N.N.M.E."/>
            <person name="Veenhuis M."/>
            <person name="von Doehren H."/>
            <person name="Wagner C."/>
            <person name="Wortman J.R."/>
            <person name="Bovenberg R.A.L."/>
        </authorList>
    </citation>
    <scope>NUCLEOTIDE SEQUENCE [LARGE SCALE GENOMIC DNA]</scope>
    <source>
        <strain>ATCC 28089 / DSM 1075 / NRRL 1951 / Wisconsin 54-1255</strain>
    </source>
</reference>
<organism>
    <name type="scientific">Penicillium rubens (strain ATCC 28089 / DSM 1075 / NRRL 1951 / Wisconsin 54-1255)</name>
    <name type="common">Penicillium chrysogenum</name>
    <dbReference type="NCBI Taxonomy" id="500485"/>
    <lineage>
        <taxon>Eukaryota</taxon>
        <taxon>Fungi</taxon>
        <taxon>Dikarya</taxon>
        <taxon>Ascomycota</taxon>
        <taxon>Pezizomycotina</taxon>
        <taxon>Eurotiomycetes</taxon>
        <taxon>Eurotiomycetidae</taxon>
        <taxon>Eurotiales</taxon>
        <taxon>Aspergillaceae</taxon>
        <taxon>Penicillium</taxon>
        <taxon>Penicillium chrysogenum species complex</taxon>
    </lineage>
</organism>
<feature type="chain" id="PRO_0000407036" description="Transcriptional activator of proteases prtT">
    <location>
        <begin position="1"/>
        <end position="637"/>
    </location>
</feature>
<feature type="DNA-binding region" description="Zn(2)-C6 fungal-type" evidence="2">
    <location>
        <begin position="47"/>
        <end position="76"/>
    </location>
</feature>
<feature type="region of interest" description="Disordered" evidence="3">
    <location>
        <begin position="127"/>
        <end position="153"/>
    </location>
</feature>
<feature type="compositionally biased region" description="Polar residues" evidence="3">
    <location>
        <begin position="127"/>
        <end position="145"/>
    </location>
</feature>
<evidence type="ECO:0000250" key="1"/>
<evidence type="ECO:0000255" key="2">
    <source>
        <dbReference type="PROSITE-ProRule" id="PRU00227"/>
    </source>
</evidence>
<evidence type="ECO:0000256" key="3">
    <source>
        <dbReference type="SAM" id="MobiDB-lite"/>
    </source>
</evidence>
<evidence type="ECO:0000305" key="4"/>
<name>PRTT_PENRW</name>
<accession>B6HRH5</accession>
<sequence>MTRTGPPINPISWDTKTIVPDDGSRIDSVACQDARPKGRIRRSMTACHTCRKLKTRCDVDPRGHSCRRCLSLRLDCELPETTERFQDNASTWSDATAVPSIEERLVSLERGMGEMIHLMRQIVKSSPSMPCSPTFQTRNHSIDGTSSSDSMSSSFYPLKPAQLIRDLQAECFGERAHFSDADILGDIVTQGIVDSKLSVKLIELFVEHFGHWVSINHSSSLQRSNTLLFNTACLLASRYMPGLPQHTVRDISLYVQHAVAKVLWKPPPMTSDMLQALTLLCLYSTSIHKEGLMDDWLLSGISINHALISFNFLNTLPGDNLSPDELLAQLRLWNTLCATQLHSALANGRTVNIQQQYINQCPRILEHAGATPEDGRIVAEIQLYRIALRLQHSQSRLQFAESEYEELERWRMEWAHLLTTNGDSTLNLNLWFCQLLLHRTAARLQPDSERLLPEICGTARLIITQFLQTRFTSAPALIDHVYFIVGYAALTLCDYTLTDPLINQVRGFLLHLAPGGDNLSYRIACIVGEVQRRYSEATAVVAAGSHSSSPVAEVKGAQMFGSSHHHRTGMELSQLMSSPEGLDSLVEGYNCLEQMMPGYAASQPAFEAPDLFHHSPTTGVTGGAMPIGLVPRALHDW</sequence>
<protein>
    <recommendedName>
        <fullName>Transcriptional activator of proteases prtT</fullName>
    </recommendedName>
    <alternativeName>
        <fullName>Zn(2)-C6 zinc finger-containing protein prtT</fullName>
    </alternativeName>
</protein>
<gene>
    <name type="primary">prtT</name>
    <name type="ORF">Pc22g12330</name>
</gene>
<dbReference type="EMBL" id="AM920437">
    <property type="protein sequence ID" value="CAP98521.1"/>
    <property type="molecule type" value="Genomic_DNA"/>
</dbReference>
<dbReference type="RefSeq" id="XP_002565177.1">
    <property type="nucleotide sequence ID" value="XM_002565131.1"/>
</dbReference>
<dbReference type="VEuPathDB" id="FungiDB:PCH_Pc22g12330"/>
<dbReference type="eggNOG" id="ENOG502QU5T">
    <property type="taxonomic scope" value="Eukaryota"/>
</dbReference>
<dbReference type="HOGENOM" id="CLU_030102_0_0_1"/>
<dbReference type="OMA" id="EMTSMMR"/>
<dbReference type="OrthoDB" id="2595934at2759"/>
<dbReference type="BioCyc" id="PCHR:PC22G12330-MONOMER"/>
<dbReference type="Proteomes" id="UP000000724">
    <property type="component" value="Contig Pc00c22"/>
</dbReference>
<dbReference type="GO" id="GO:0005634">
    <property type="term" value="C:nucleus"/>
    <property type="evidence" value="ECO:0007669"/>
    <property type="project" value="UniProtKB-SubCell"/>
</dbReference>
<dbReference type="GO" id="GO:0000981">
    <property type="term" value="F:DNA-binding transcription factor activity, RNA polymerase II-specific"/>
    <property type="evidence" value="ECO:0007669"/>
    <property type="project" value="InterPro"/>
</dbReference>
<dbReference type="GO" id="GO:0000976">
    <property type="term" value="F:transcription cis-regulatory region binding"/>
    <property type="evidence" value="ECO:0007669"/>
    <property type="project" value="TreeGrafter"/>
</dbReference>
<dbReference type="GO" id="GO:0008270">
    <property type="term" value="F:zinc ion binding"/>
    <property type="evidence" value="ECO:0007669"/>
    <property type="project" value="InterPro"/>
</dbReference>
<dbReference type="CDD" id="cd12148">
    <property type="entry name" value="fungal_TF_MHR"/>
    <property type="match status" value="1"/>
</dbReference>
<dbReference type="CDD" id="cd00067">
    <property type="entry name" value="GAL4"/>
    <property type="match status" value="1"/>
</dbReference>
<dbReference type="FunFam" id="4.10.240.10:FF:000011">
    <property type="entry name" value="Transcriptional activator of proteases prtT"/>
    <property type="match status" value="1"/>
</dbReference>
<dbReference type="Gene3D" id="4.10.240.10">
    <property type="entry name" value="Zn(2)-C6 fungal-type DNA-binding domain"/>
    <property type="match status" value="1"/>
</dbReference>
<dbReference type="InterPro" id="IPR051089">
    <property type="entry name" value="prtT"/>
</dbReference>
<dbReference type="InterPro" id="IPR036864">
    <property type="entry name" value="Zn2-C6_fun-type_DNA-bd_sf"/>
</dbReference>
<dbReference type="InterPro" id="IPR001138">
    <property type="entry name" value="Zn2Cys6_DnaBD"/>
</dbReference>
<dbReference type="PANTHER" id="PTHR31845">
    <property type="entry name" value="FINGER DOMAIN PROTEIN, PUTATIVE-RELATED"/>
    <property type="match status" value="1"/>
</dbReference>
<dbReference type="PANTHER" id="PTHR31845:SF34">
    <property type="entry name" value="TRANSCRIPTIONAL ACTIVATOR OF PROTEASES PRTT"/>
    <property type="match status" value="1"/>
</dbReference>
<dbReference type="Pfam" id="PF00172">
    <property type="entry name" value="Zn_clus"/>
    <property type="match status" value="1"/>
</dbReference>
<dbReference type="SMART" id="SM00066">
    <property type="entry name" value="GAL4"/>
    <property type="match status" value="1"/>
</dbReference>
<dbReference type="SUPFAM" id="SSF57701">
    <property type="entry name" value="Zn2/Cys6 DNA-binding domain"/>
    <property type="match status" value="1"/>
</dbReference>
<dbReference type="PROSITE" id="PS00463">
    <property type="entry name" value="ZN2_CY6_FUNGAL_1"/>
    <property type="match status" value="1"/>
</dbReference>
<dbReference type="PROSITE" id="PS50048">
    <property type="entry name" value="ZN2_CY6_FUNGAL_2"/>
    <property type="match status" value="1"/>
</dbReference>
<comment type="function">
    <text evidence="1">Transcription factor required for protein utilization and degradation. Regulates transcription of major secreted proteases (By similarity).</text>
</comment>
<comment type="subcellular location">
    <subcellularLocation>
        <location evidence="2">Nucleus</location>
    </subcellularLocation>
</comment>
<comment type="similarity">
    <text evidence="4">Belongs to the prtT family.</text>
</comment>
<proteinExistence type="inferred from homology"/>